<accession>Q6LMR2</accession>
<name>SDHE_PHOPR</name>
<feature type="chain" id="PRO_0000214410" description="FAD assembly factor SdhE">
    <location>
        <begin position="1"/>
        <end position="88"/>
    </location>
</feature>
<reference key="1">
    <citation type="journal article" date="2005" name="Science">
        <title>Life at depth: Photobacterium profundum genome sequence and expression analysis.</title>
        <authorList>
            <person name="Vezzi A."/>
            <person name="Campanaro S."/>
            <person name="D'Angelo M."/>
            <person name="Simonato F."/>
            <person name="Vitulo N."/>
            <person name="Lauro F.M."/>
            <person name="Cestaro A."/>
            <person name="Malacrida G."/>
            <person name="Simionati B."/>
            <person name="Cannata N."/>
            <person name="Romualdi C."/>
            <person name="Bartlett D.H."/>
            <person name="Valle G."/>
        </authorList>
    </citation>
    <scope>NUCLEOTIDE SEQUENCE [LARGE SCALE GENOMIC DNA]</scope>
    <source>
        <strain>ATCC BAA-1253 / SS9</strain>
    </source>
</reference>
<sequence>MYMLSSDERARLKWACRRGMLELDVIIMPFFEECLDDLPDQEQRDFVSLLTSDDPDLFTWMMGHGRSENPAHAAMVDKIVAHNNSKLR</sequence>
<evidence type="ECO:0000250" key="1">
    <source>
        <dbReference type="UniProtKB" id="G4V4G2"/>
    </source>
</evidence>
<evidence type="ECO:0000305" key="2"/>
<protein>
    <recommendedName>
        <fullName>FAD assembly factor SdhE</fullName>
    </recommendedName>
</protein>
<proteinExistence type="inferred from homology"/>
<keyword id="KW-0143">Chaperone</keyword>
<keyword id="KW-0963">Cytoplasm</keyword>
<keyword id="KW-1185">Reference proteome</keyword>
<gene>
    <name type="primary">sdhE</name>
    <name type="ordered locus">PBPRA3099</name>
</gene>
<comment type="function">
    <text evidence="1">An FAD assembly protein, which accelerates covalent attachment of the cofactor into other proteins. Plays an essential role in the assembly of succinate dehydrogenase (SDH, respiratory complex II), an enzyme complex that is a component of both the tricarboxylic acid cycle and the electron transport chain, and which couples the oxidation of succinate to fumarate with the reduction of ubiquinone (coenzyme Q) to ubiquinol. Required for flavinylation (covalent attachment of FAD) of the flavoprotein subunit SdhA of SDH and other flavinylated proteins as well.</text>
</comment>
<comment type="subcellular location">
    <subcellularLocation>
        <location evidence="1">Cytoplasm</location>
    </subcellularLocation>
</comment>
<comment type="similarity">
    <text evidence="2">Belongs to the SdhE FAD assembly factor family.</text>
</comment>
<organism>
    <name type="scientific">Photobacterium profundum (strain SS9)</name>
    <dbReference type="NCBI Taxonomy" id="298386"/>
    <lineage>
        <taxon>Bacteria</taxon>
        <taxon>Pseudomonadati</taxon>
        <taxon>Pseudomonadota</taxon>
        <taxon>Gammaproteobacteria</taxon>
        <taxon>Vibrionales</taxon>
        <taxon>Vibrionaceae</taxon>
        <taxon>Photobacterium</taxon>
    </lineage>
</organism>
<dbReference type="EMBL" id="CR378673">
    <property type="protein sequence ID" value="CAG21415.1"/>
    <property type="molecule type" value="Genomic_DNA"/>
</dbReference>
<dbReference type="SMR" id="Q6LMR2"/>
<dbReference type="STRING" id="298386.PBPRA3099"/>
<dbReference type="KEGG" id="ppr:PBPRA3099"/>
<dbReference type="eggNOG" id="COG2938">
    <property type="taxonomic scope" value="Bacteria"/>
</dbReference>
<dbReference type="HOGENOM" id="CLU_103054_2_2_6"/>
<dbReference type="Proteomes" id="UP000000593">
    <property type="component" value="Chromosome 1"/>
</dbReference>
<dbReference type="GO" id="GO:0005737">
    <property type="term" value="C:cytoplasm"/>
    <property type="evidence" value="ECO:0007669"/>
    <property type="project" value="UniProtKB-SubCell"/>
</dbReference>
<dbReference type="GO" id="GO:0006105">
    <property type="term" value="P:succinate metabolic process"/>
    <property type="evidence" value="ECO:0007669"/>
    <property type="project" value="TreeGrafter"/>
</dbReference>
<dbReference type="FunFam" id="1.10.150.250:FF:000001">
    <property type="entry name" value="FAD assembly factor SdhE"/>
    <property type="match status" value="1"/>
</dbReference>
<dbReference type="Gene3D" id="1.10.150.250">
    <property type="entry name" value="Flavinator of succinate dehydrogenase"/>
    <property type="match status" value="1"/>
</dbReference>
<dbReference type="InterPro" id="IPR005631">
    <property type="entry name" value="SDH"/>
</dbReference>
<dbReference type="InterPro" id="IPR036714">
    <property type="entry name" value="SDH_sf"/>
</dbReference>
<dbReference type="InterPro" id="IPR050531">
    <property type="entry name" value="SdhE_FAD_assembly_factor"/>
</dbReference>
<dbReference type="PANTHER" id="PTHR39585">
    <property type="entry name" value="FAD ASSEMBLY FACTOR SDHE"/>
    <property type="match status" value="1"/>
</dbReference>
<dbReference type="PANTHER" id="PTHR39585:SF1">
    <property type="entry name" value="FAD ASSEMBLY FACTOR SDHE"/>
    <property type="match status" value="1"/>
</dbReference>
<dbReference type="Pfam" id="PF03937">
    <property type="entry name" value="Sdh5"/>
    <property type="match status" value="1"/>
</dbReference>
<dbReference type="SUPFAM" id="SSF109910">
    <property type="entry name" value="YgfY-like"/>
    <property type="match status" value="1"/>
</dbReference>